<protein>
    <recommendedName>
        <fullName evidence="4">Retrotransposon Gag-like protein 8A</fullName>
    </recommendedName>
    <alternativeName>
        <fullName>Mammalian retrotransposon derived protein 8A</fullName>
    </alternativeName>
</protein>
<organism>
    <name type="scientific">Homo sapiens</name>
    <name type="common">Human</name>
    <dbReference type="NCBI Taxonomy" id="9606"/>
    <lineage>
        <taxon>Eukaryota</taxon>
        <taxon>Metazoa</taxon>
        <taxon>Chordata</taxon>
        <taxon>Craniata</taxon>
        <taxon>Vertebrata</taxon>
        <taxon>Euteleostomi</taxon>
        <taxon>Mammalia</taxon>
        <taxon>Eutheria</taxon>
        <taxon>Euarchontoglires</taxon>
        <taxon>Primates</taxon>
        <taxon>Haplorrhini</taxon>
        <taxon>Catarrhini</taxon>
        <taxon>Hominidae</taxon>
        <taxon>Homo</taxon>
    </lineage>
</organism>
<accession>Q9BWD3</accession>
<accession>A2A2V9</accession>
<accession>Q8TBU2</accession>
<gene>
    <name evidence="4" type="primary">RTL8A</name>
    <name type="synonym">CXX1B</name>
    <name evidence="3" type="synonym">FAM127B</name>
    <name type="synonym">MAR8A</name>
</gene>
<dbReference type="EMBL" id="AL136169">
    <property type="status" value="NOT_ANNOTATED_CDS"/>
    <property type="molecule type" value="Genomic_DNA"/>
</dbReference>
<dbReference type="EMBL" id="BC000393">
    <property type="protein sequence ID" value="AAH00393.2"/>
    <property type="molecule type" value="mRNA"/>
</dbReference>
<dbReference type="EMBL" id="BC019300">
    <property type="protein sequence ID" value="AAH19300.1"/>
    <property type="molecule type" value="mRNA"/>
</dbReference>
<dbReference type="CCDS" id="CCDS43998.1"/>
<dbReference type="RefSeq" id="NP_001071640.1">
    <property type="nucleotide sequence ID" value="NM_001078172.2"/>
</dbReference>
<dbReference type="RefSeq" id="NP_001127793.1">
    <property type="nucleotide sequence ID" value="NM_001134321.1"/>
</dbReference>
<dbReference type="SMR" id="Q9BWD3"/>
<dbReference type="BioGRID" id="117530">
    <property type="interactions" value="10"/>
</dbReference>
<dbReference type="FunCoup" id="Q9BWD3">
    <property type="interactions" value="16"/>
</dbReference>
<dbReference type="IntAct" id="Q9BWD3">
    <property type="interactions" value="4"/>
</dbReference>
<dbReference type="STRING" id="9606.ENSP00000375267"/>
<dbReference type="iPTMnet" id="Q9BWD3"/>
<dbReference type="PhosphoSitePlus" id="Q9BWD3"/>
<dbReference type="BioMuta" id="RTL8A"/>
<dbReference type="jPOST" id="Q9BWD3"/>
<dbReference type="MassIVE" id="Q9BWD3"/>
<dbReference type="PaxDb" id="9606-ENSP00000375267"/>
<dbReference type="PeptideAtlas" id="Q9BWD3"/>
<dbReference type="ProteomicsDB" id="79269"/>
<dbReference type="Pumba" id="Q9BWD3"/>
<dbReference type="TopDownProteomics" id="Q9BWD3"/>
<dbReference type="Antibodypedia" id="44892">
    <property type="antibodies" value="52 antibodies from 13 providers"/>
</dbReference>
<dbReference type="DNASU" id="26071"/>
<dbReference type="Ensembl" id="ENST00000370775.3">
    <property type="protein sequence ID" value="ENSP00000375267.1"/>
    <property type="gene ID" value="ENSG00000203950.7"/>
</dbReference>
<dbReference type="GeneID" id="26071"/>
<dbReference type="KEGG" id="hsa:26071"/>
<dbReference type="MANE-Select" id="ENST00000370775.3">
    <property type="protein sequence ID" value="ENSP00000375267.1"/>
    <property type="RefSeq nucleotide sequence ID" value="NM_001078172.2"/>
    <property type="RefSeq protein sequence ID" value="NP_001071640.1"/>
</dbReference>
<dbReference type="UCSC" id="uc004eyf.4">
    <property type="organism name" value="human"/>
</dbReference>
<dbReference type="AGR" id="HGNC:24514"/>
<dbReference type="CTD" id="26071"/>
<dbReference type="DisGeNET" id="26071"/>
<dbReference type="GeneCards" id="RTL8A"/>
<dbReference type="HGNC" id="HGNC:24514">
    <property type="gene designation" value="RTL8A"/>
</dbReference>
<dbReference type="HPA" id="ENSG00000203950">
    <property type="expression patterns" value="Low tissue specificity"/>
</dbReference>
<dbReference type="neXtProt" id="NX_Q9BWD3"/>
<dbReference type="OpenTargets" id="ENSG00000203950"/>
<dbReference type="PharmGKB" id="PA162385915"/>
<dbReference type="VEuPathDB" id="HostDB:ENSG00000203950"/>
<dbReference type="eggNOG" id="ENOG502RU23">
    <property type="taxonomic scope" value="Eukaryota"/>
</dbReference>
<dbReference type="GeneTree" id="ENSGT00940000154665"/>
<dbReference type="HOGENOM" id="CLU_154949_0_0_1"/>
<dbReference type="InParanoid" id="Q9BWD3"/>
<dbReference type="OMA" id="LMAWPRR"/>
<dbReference type="OrthoDB" id="9508136at2759"/>
<dbReference type="PAN-GO" id="Q9BWD3">
    <property type="GO annotations" value="1 GO annotation based on evolutionary models"/>
</dbReference>
<dbReference type="PhylomeDB" id="Q9BWD3"/>
<dbReference type="TreeFam" id="TF337843"/>
<dbReference type="PathwayCommons" id="Q9BWD3"/>
<dbReference type="SignaLink" id="Q9BWD3"/>
<dbReference type="BioGRID-ORCS" id="26071">
    <property type="hits" value="10 hits in 702 CRISPR screens"/>
</dbReference>
<dbReference type="ChiTaRS" id="FAM127B">
    <property type="organism name" value="human"/>
</dbReference>
<dbReference type="GenomeRNAi" id="26071"/>
<dbReference type="Pharos" id="Q9BWD3">
    <property type="development level" value="Tdark"/>
</dbReference>
<dbReference type="PRO" id="PR:Q9BWD3"/>
<dbReference type="Proteomes" id="UP000005640">
    <property type="component" value="Chromosome X"/>
</dbReference>
<dbReference type="RNAct" id="Q9BWD3">
    <property type="molecule type" value="protein"/>
</dbReference>
<dbReference type="Bgee" id="ENSG00000203950">
    <property type="expression patterns" value="Expressed in ganglionic eminence and 141 other cell types or tissues"/>
</dbReference>
<dbReference type="InterPro" id="IPR032549">
    <property type="entry name" value="DUF4939"/>
</dbReference>
<dbReference type="Pfam" id="PF16297">
    <property type="entry name" value="DUF4939"/>
    <property type="match status" value="1"/>
</dbReference>
<evidence type="ECO:0000269" key="1">
    <source>
    </source>
</evidence>
<evidence type="ECO:0000269" key="2">
    <source>
    </source>
</evidence>
<evidence type="ECO:0000305" key="3"/>
<evidence type="ECO:0000312" key="4">
    <source>
        <dbReference type="HGNC" id="HGNC:24514"/>
    </source>
</evidence>
<sequence>MDGRVQLMKALLAGPLRPAARRWRNPIPFPETFDGDTDRLPEFIVQTSSYMFVDENTFSNDALKVTFLITRLTGPALQWVIPYIRKESPLLNDYRGFLAEMKRVFGWEEDEDF</sequence>
<comment type="interaction">
    <interactant intactId="EBI-741643">
        <id>Q9BWD3</id>
    </interactant>
    <interactant intactId="EBI-10171570">
        <id>Q68D86</id>
        <label>CCDC102B</label>
    </interactant>
    <organismsDiffer>false</organismsDiffer>
    <experiments>3</experiments>
</comment>
<comment type="interaction">
    <interactant intactId="EBI-741643">
        <id>Q9BWD3</id>
    </interactant>
    <interactant intactId="EBI-6259410">
        <id>Q86TG7-2</id>
        <label>PEG10</label>
    </interactant>
    <organismsDiffer>false</organismsDiffer>
    <experiments>8</experiments>
</comment>
<comment type="interaction">
    <interactant intactId="EBI-741643">
        <id>Q9BWD3</id>
    </interactant>
    <interactant intactId="EBI-741480">
        <id>Q9UMX0</id>
        <label>UBQLN1</label>
    </interactant>
    <organismsDiffer>false</organismsDiffer>
    <experiments>4</experiments>
</comment>
<comment type="interaction">
    <interactant intactId="EBI-741643">
        <id>Q9BWD3</id>
    </interactant>
    <interactant intactId="EBI-10173939">
        <id>Q9UMX0-2</id>
        <label>UBQLN1</label>
    </interactant>
    <organismsDiffer>false</organismsDiffer>
    <experiments>3</experiments>
</comment>
<comment type="interaction">
    <interactant intactId="EBI-741643">
        <id>Q9BWD3</id>
    </interactant>
    <interactant intactId="EBI-947187">
        <id>Q9UHD9</id>
        <label>UBQLN2</label>
    </interactant>
    <organismsDiffer>false</organismsDiffer>
    <experiments>3</experiments>
</comment>
<comment type="miscellaneous">
    <text evidence="2">RTL8A is one of at least 11 genes called Mar or Mart related to long terminal repeat retrotransposons. They do not correspond to functional retrotransposons, but rather to neofunctionalized retrotransposons genes.</text>
</comment>
<comment type="similarity">
    <text evidence="3">Belongs to the FAM127 family.</text>
</comment>
<keyword id="KW-1267">Proteomics identification</keyword>
<keyword id="KW-1185">Reference proteome</keyword>
<reference key="1">
    <citation type="journal article" date="2005" name="Nature">
        <title>The DNA sequence of the human X chromosome.</title>
        <authorList>
            <person name="Ross M.T."/>
            <person name="Grafham D.V."/>
            <person name="Coffey A.J."/>
            <person name="Scherer S."/>
            <person name="McLay K."/>
            <person name="Muzny D."/>
            <person name="Platzer M."/>
            <person name="Howell G.R."/>
            <person name="Burrows C."/>
            <person name="Bird C.P."/>
            <person name="Frankish A."/>
            <person name="Lovell F.L."/>
            <person name="Howe K.L."/>
            <person name="Ashurst J.L."/>
            <person name="Fulton R.S."/>
            <person name="Sudbrak R."/>
            <person name="Wen G."/>
            <person name="Jones M.C."/>
            <person name="Hurles M.E."/>
            <person name="Andrews T.D."/>
            <person name="Scott C.E."/>
            <person name="Searle S."/>
            <person name="Ramser J."/>
            <person name="Whittaker A."/>
            <person name="Deadman R."/>
            <person name="Carter N.P."/>
            <person name="Hunt S.E."/>
            <person name="Chen R."/>
            <person name="Cree A."/>
            <person name="Gunaratne P."/>
            <person name="Havlak P."/>
            <person name="Hodgson A."/>
            <person name="Metzker M.L."/>
            <person name="Richards S."/>
            <person name="Scott G."/>
            <person name="Steffen D."/>
            <person name="Sodergren E."/>
            <person name="Wheeler D.A."/>
            <person name="Worley K.C."/>
            <person name="Ainscough R."/>
            <person name="Ambrose K.D."/>
            <person name="Ansari-Lari M.A."/>
            <person name="Aradhya S."/>
            <person name="Ashwell R.I."/>
            <person name="Babbage A.K."/>
            <person name="Bagguley C.L."/>
            <person name="Ballabio A."/>
            <person name="Banerjee R."/>
            <person name="Barker G.E."/>
            <person name="Barlow K.F."/>
            <person name="Barrett I.P."/>
            <person name="Bates K.N."/>
            <person name="Beare D.M."/>
            <person name="Beasley H."/>
            <person name="Beasley O."/>
            <person name="Beck A."/>
            <person name="Bethel G."/>
            <person name="Blechschmidt K."/>
            <person name="Brady N."/>
            <person name="Bray-Allen S."/>
            <person name="Bridgeman A.M."/>
            <person name="Brown A.J."/>
            <person name="Brown M.J."/>
            <person name="Bonnin D."/>
            <person name="Bruford E.A."/>
            <person name="Buhay C."/>
            <person name="Burch P."/>
            <person name="Burford D."/>
            <person name="Burgess J."/>
            <person name="Burrill W."/>
            <person name="Burton J."/>
            <person name="Bye J.M."/>
            <person name="Carder C."/>
            <person name="Carrel L."/>
            <person name="Chako J."/>
            <person name="Chapman J.C."/>
            <person name="Chavez D."/>
            <person name="Chen E."/>
            <person name="Chen G."/>
            <person name="Chen Y."/>
            <person name="Chen Z."/>
            <person name="Chinault C."/>
            <person name="Ciccodicola A."/>
            <person name="Clark S.Y."/>
            <person name="Clarke G."/>
            <person name="Clee C.M."/>
            <person name="Clegg S."/>
            <person name="Clerc-Blankenburg K."/>
            <person name="Clifford K."/>
            <person name="Cobley V."/>
            <person name="Cole C.G."/>
            <person name="Conquer J.S."/>
            <person name="Corby N."/>
            <person name="Connor R.E."/>
            <person name="David R."/>
            <person name="Davies J."/>
            <person name="Davis C."/>
            <person name="Davis J."/>
            <person name="Delgado O."/>
            <person name="Deshazo D."/>
            <person name="Dhami P."/>
            <person name="Ding Y."/>
            <person name="Dinh H."/>
            <person name="Dodsworth S."/>
            <person name="Draper H."/>
            <person name="Dugan-Rocha S."/>
            <person name="Dunham A."/>
            <person name="Dunn M."/>
            <person name="Durbin K.J."/>
            <person name="Dutta I."/>
            <person name="Eades T."/>
            <person name="Ellwood M."/>
            <person name="Emery-Cohen A."/>
            <person name="Errington H."/>
            <person name="Evans K.L."/>
            <person name="Faulkner L."/>
            <person name="Francis F."/>
            <person name="Frankland J."/>
            <person name="Fraser A.E."/>
            <person name="Galgoczy P."/>
            <person name="Gilbert J."/>
            <person name="Gill R."/>
            <person name="Gloeckner G."/>
            <person name="Gregory S.G."/>
            <person name="Gribble S."/>
            <person name="Griffiths C."/>
            <person name="Grocock R."/>
            <person name="Gu Y."/>
            <person name="Gwilliam R."/>
            <person name="Hamilton C."/>
            <person name="Hart E.A."/>
            <person name="Hawes A."/>
            <person name="Heath P.D."/>
            <person name="Heitmann K."/>
            <person name="Hennig S."/>
            <person name="Hernandez J."/>
            <person name="Hinzmann B."/>
            <person name="Ho S."/>
            <person name="Hoffs M."/>
            <person name="Howden P.J."/>
            <person name="Huckle E.J."/>
            <person name="Hume J."/>
            <person name="Hunt P.J."/>
            <person name="Hunt A.R."/>
            <person name="Isherwood J."/>
            <person name="Jacob L."/>
            <person name="Johnson D."/>
            <person name="Jones S."/>
            <person name="de Jong P.J."/>
            <person name="Joseph S.S."/>
            <person name="Keenan S."/>
            <person name="Kelly S."/>
            <person name="Kershaw J.K."/>
            <person name="Khan Z."/>
            <person name="Kioschis P."/>
            <person name="Klages S."/>
            <person name="Knights A.J."/>
            <person name="Kosiura A."/>
            <person name="Kovar-Smith C."/>
            <person name="Laird G.K."/>
            <person name="Langford C."/>
            <person name="Lawlor S."/>
            <person name="Leversha M."/>
            <person name="Lewis L."/>
            <person name="Liu W."/>
            <person name="Lloyd C."/>
            <person name="Lloyd D.M."/>
            <person name="Loulseged H."/>
            <person name="Loveland J.E."/>
            <person name="Lovell J.D."/>
            <person name="Lozado R."/>
            <person name="Lu J."/>
            <person name="Lyne R."/>
            <person name="Ma J."/>
            <person name="Maheshwari M."/>
            <person name="Matthews L.H."/>
            <person name="McDowall J."/>
            <person name="McLaren S."/>
            <person name="McMurray A."/>
            <person name="Meidl P."/>
            <person name="Meitinger T."/>
            <person name="Milne S."/>
            <person name="Miner G."/>
            <person name="Mistry S.L."/>
            <person name="Morgan M."/>
            <person name="Morris S."/>
            <person name="Mueller I."/>
            <person name="Mullikin J.C."/>
            <person name="Nguyen N."/>
            <person name="Nordsiek G."/>
            <person name="Nyakatura G."/>
            <person name="O'dell C.N."/>
            <person name="Okwuonu G."/>
            <person name="Palmer S."/>
            <person name="Pandian R."/>
            <person name="Parker D."/>
            <person name="Parrish J."/>
            <person name="Pasternak S."/>
            <person name="Patel D."/>
            <person name="Pearce A.V."/>
            <person name="Pearson D.M."/>
            <person name="Pelan S.E."/>
            <person name="Perez L."/>
            <person name="Porter K.M."/>
            <person name="Ramsey Y."/>
            <person name="Reichwald K."/>
            <person name="Rhodes S."/>
            <person name="Ridler K.A."/>
            <person name="Schlessinger D."/>
            <person name="Schueler M.G."/>
            <person name="Sehra H.K."/>
            <person name="Shaw-Smith C."/>
            <person name="Shen H."/>
            <person name="Sheridan E.M."/>
            <person name="Shownkeen R."/>
            <person name="Skuce C.D."/>
            <person name="Smith M.L."/>
            <person name="Sotheran E.C."/>
            <person name="Steingruber H.E."/>
            <person name="Steward C.A."/>
            <person name="Storey R."/>
            <person name="Swann R.M."/>
            <person name="Swarbreck D."/>
            <person name="Tabor P.E."/>
            <person name="Taudien S."/>
            <person name="Taylor T."/>
            <person name="Teague B."/>
            <person name="Thomas K."/>
            <person name="Thorpe A."/>
            <person name="Timms K."/>
            <person name="Tracey A."/>
            <person name="Trevanion S."/>
            <person name="Tromans A.C."/>
            <person name="d'Urso M."/>
            <person name="Verduzco D."/>
            <person name="Villasana D."/>
            <person name="Waldron L."/>
            <person name="Wall M."/>
            <person name="Wang Q."/>
            <person name="Warren J."/>
            <person name="Warry G.L."/>
            <person name="Wei X."/>
            <person name="West A."/>
            <person name="Whitehead S.L."/>
            <person name="Whiteley M.N."/>
            <person name="Wilkinson J.E."/>
            <person name="Willey D.L."/>
            <person name="Williams G."/>
            <person name="Williams L."/>
            <person name="Williamson A."/>
            <person name="Williamson H."/>
            <person name="Wilming L."/>
            <person name="Woodmansey R.L."/>
            <person name="Wray P.W."/>
            <person name="Yen J."/>
            <person name="Zhang J."/>
            <person name="Zhou J."/>
            <person name="Zoghbi H."/>
            <person name="Zorilla S."/>
            <person name="Buck D."/>
            <person name="Reinhardt R."/>
            <person name="Poustka A."/>
            <person name="Rosenthal A."/>
            <person name="Lehrach H."/>
            <person name="Meindl A."/>
            <person name="Minx P.J."/>
            <person name="Hillier L.W."/>
            <person name="Willard H.F."/>
            <person name="Wilson R.K."/>
            <person name="Waterston R.H."/>
            <person name="Rice C.M."/>
            <person name="Vaudin M."/>
            <person name="Coulson A."/>
            <person name="Nelson D.L."/>
            <person name="Weinstock G."/>
            <person name="Sulston J.E."/>
            <person name="Durbin R.M."/>
            <person name="Hubbard T."/>
            <person name="Gibbs R.A."/>
            <person name="Beck S."/>
            <person name="Rogers J."/>
            <person name="Bentley D.R."/>
        </authorList>
    </citation>
    <scope>NUCLEOTIDE SEQUENCE [LARGE SCALE GENOMIC DNA]</scope>
</reference>
<reference key="2">
    <citation type="journal article" date="2004" name="Genome Res.">
        <title>The status, quality, and expansion of the NIH full-length cDNA project: the Mammalian Gene Collection (MGC).</title>
        <authorList>
            <consortium name="The MGC Project Team"/>
        </authorList>
    </citation>
    <scope>NUCLEOTIDE SEQUENCE [LARGE SCALE MRNA]</scope>
    <scope>VARIANT CYS-48</scope>
    <source>
        <tissue>Lung</tissue>
    </source>
</reference>
<reference key="3">
    <citation type="journal article" date="2005" name="Cytogenet. Genome Res.">
        <title>A family of neofunctionalized Ty3/gypsy retrotransposon genes in mammalian genomes.</title>
        <authorList>
            <person name="Brandt J."/>
            <person name="Veith A.-M."/>
            <person name="Volff J.-N."/>
        </authorList>
    </citation>
    <scope>GENE FAMILY</scope>
</reference>
<reference key="4">
    <citation type="journal article" date="2011" name="BMC Syst. Biol.">
        <title>Initial characterization of the human central proteome.</title>
        <authorList>
            <person name="Burkard T.R."/>
            <person name="Planyavsky M."/>
            <person name="Kaupe I."/>
            <person name="Breitwieser F.P."/>
            <person name="Buerckstuemmer T."/>
            <person name="Bennett K.L."/>
            <person name="Superti-Furga G."/>
            <person name="Colinge J."/>
        </authorList>
    </citation>
    <scope>IDENTIFICATION BY MASS SPECTROMETRY [LARGE SCALE ANALYSIS]</scope>
</reference>
<name>RTL8A_HUMAN</name>
<feature type="chain" id="PRO_0000311693" description="Retrotransposon Gag-like protein 8A">
    <location>
        <begin position="1"/>
        <end position="113"/>
    </location>
</feature>
<feature type="sequence variant" id="VAR_060162" description="In dbSNP:rs2498776." evidence="1">
    <original>S</original>
    <variation>C</variation>
    <location>
        <position position="48"/>
    </location>
</feature>
<proteinExistence type="evidence at protein level"/>